<reference key="1">
    <citation type="submission" date="2005-08" db="EMBL/GenBank/DDBJ databases">
        <title>Complete sequence of Pelodictyon luteolum DSM 273.</title>
        <authorList>
            <consortium name="US DOE Joint Genome Institute"/>
            <person name="Copeland A."/>
            <person name="Lucas S."/>
            <person name="Lapidus A."/>
            <person name="Barry K."/>
            <person name="Detter J.C."/>
            <person name="Glavina T."/>
            <person name="Hammon N."/>
            <person name="Israni S."/>
            <person name="Pitluck S."/>
            <person name="Bryant D."/>
            <person name="Schmutz J."/>
            <person name="Larimer F."/>
            <person name="Land M."/>
            <person name="Kyrpides N."/>
            <person name="Ivanova N."/>
            <person name="Richardson P."/>
        </authorList>
    </citation>
    <scope>NUCLEOTIDE SEQUENCE [LARGE SCALE GENOMIC DNA]</scope>
    <source>
        <strain>DSM 273 / BCRC 81028 / 2530</strain>
    </source>
</reference>
<gene>
    <name evidence="1" type="primary">rplF</name>
    <name type="ordered locus">Plut_0196</name>
</gene>
<accession>Q3B6E7</accession>
<keyword id="KW-1185">Reference proteome</keyword>
<keyword id="KW-0687">Ribonucleoprotein</keyword>
<keyword id="KW-0689">Ribosomal protein</keyword>
<keyword id="KW-0694">RNA-binding</keyword>
<keyword id="KW-0699">rRNA-binding</keyword>
<name>RL6_CHLL3</name>
<organism>
    <name type="scientific">Chlorobium luteolum (strain DSM 273 / BCRC 81028 / 2530)</name>
    <name type="common">Pelodictyon luteolum</name>
    <dbReference type="NCBI Taxonomy" id="319225"/>
    <lineage>
        <taxon>Bacteria</taxon>
        <taxon>Pseudomonadati</taxon>
        <taxon>Chlorobiota</taxon>
        <taxon>Chlorobiia</taxon>
        <taxon>Chlorobiales</taxon>
        <taxon>Chlorobiaceae</taxon>
        <taxon>Chlorobium/Pelodictyon group</taxon>
        <taxon>Pelodictyon</taxon>
    </lineage>
</organism>
<dbReference type="EMBL" id="CP000096">
    <property type="protein sequence ID" value="ABB23084.1"/>
    <property type="molecule type" value="Genomic_DNA"/>
</dbReference>
<dbReference type="RefSeq" id="WP_011356960.1">
    <property type="nucleotide sequence ID" value="NC_007512.1"/>
</dbReference>
<dbReference type="SMR" id="Q3B6E7"/>
<dbReference type="STRING" id="319225.Plut_0196"/>
<dbReference type="KEGG" id="plt:Plut_0196"/>
<dbReference type="eggNOG" id="COG0097">
    <property type="taxonomic scope" value="Bacteria"/>
</dbReference>
<dbReference type="HOGENOM" id="CLU_065464_1_2_10"/>
<dbReference type="OrthoDB" id="9805007at2"/>
<dbReference type="Proteomes" id="UP000002709">
    <property type="component" value="Chromosome"/>
</dbReference>
<dbReference type="GO" id="GO:0022625">
    <property type="term" value="C:cytosolic large ribosomal subunit"/>
    <property type="evidence" value="ECO:0007669"/>
    <property type="project" value="TreeGrafter"/>
</dbReference>
<dbReference type="GO" id="GO:0019843">
    <property type="term" value="F:rRNA binding"/>
    <property type="evidence" value="ECO:0007669"/>
    <property type="project" value="UniProtKB-UniRule"/>
</dbReference>
<dbReference type="GO" id="GO:0003735">
    <property type="term" value="F:structural constituent of ribosome"/>
    <property type="evidence" value="ECO:0007669"/>
    <property type="project" value="InterPro"/>
</dbReference>
<dbReference type="GO" id="GO:0002181">
    <property type="term" value="P:cytoplasmic translation"/>
    <property type="evidence" value="ECO:0007669"/>
    <property type="project" value="TreeGrafter"/>
</dbReference>
<dbReference type="FunFam" id="3.90.930.12:FF:000001">
    <property type="entry name" value="50S ribosomal protein L6"/>
    <property type="match status" value="1"/>
</dbReference>
<dbReference type="Gene3D" id="3.90.930.12">
    <property type="entry name" value="Ribosomal protein L6, alpha-beta domain"/>
    <property type="match status" value="2"/>
</dbReference>
<dbReference type="HAMAP" id="MF_01365_B">
    <property type="entry name" value="Ribosomal_uL6_B"/>
    <property type="match status" value="1"/>
</dbReference>
<dbReference type="InterPro" id="IPR000702">
    <property type="entry name" value="Ribosomal_uL6-like"/>
</dbReference>
<dbReference type="InterPro" id="IPR036789">
    <property type="entry name" value="Ribosomal_uL6-like_a/b-dom_sf"/>
</dbReference>
<dbReference type="InterPro" id="IPR020040">
    <property type="entry name" value="Ribosomal_uL6_a/b-dom"/>
</dbReference>
<dbReference type="InterPro" id="IPR019906">
    <property type="entry name" value="Ribosomal_uL6_bac-type"/>
</dbReference>
<dbReference type="NCBIfam" id="TIGR03654">
    <property type="entry name" value="L6_bact"/>
    <property type="match status" value="1"/>
</dbReference>
<dbReference type="PANTHER" id="PTHR11655">
    <property type="entry name" value="60S/50S RIBOSOMAL PROTEIN L6/L9"/>
    <property type="match status" value="1"/>
</dbReference>
<dbReference type="PANTHER" id="PTHR11655:SF14">
    <property type="entry name" value="LARGE RIBOSOMAL SUBUNIT PROTEIN UL6M"/>
    <property type="match status" value="1"/>
</dbReference>
<dbReference type="Pfam" id="PF00347">
    <property type="entry name" value="Ribosomal_L6"/>
    <property type="match status" value="2"/>
</dbReference>
<dbReference type="PIRSF" id="PIRSF002162">
    <property type="entry name" value="Ribosomal_L6"/>
    <property type="match status" value="1"/>
</dbReference>
<dbReference type="PRINTS" id="PR00059">
    <property type="entry name" value="RIBOSOMALL6"/>
</dbReference>
<dbReference type="SUPFAM" id="SSF56053">
    <property type="entry name" value="Ribosomal protein L6"/>
    <property type="match status" value="2"/>
</dbReference>
<evidence type="ECO:0000255" key="1">
    <source>
        <dbReference type="HAMAP-Rule" id="MF_01365"/>
    </source>
</evidence>
<evidence type="ECO:0000305" key="2"/>
<sequence length="179" mass="19685">MSRIGKMPIAIGNEAKIEVKGGIITVTGPKGVLDQPMVEEVRIVEEDGKVLVQRINDSKRARAMHGLYRMLVSNMIQGVTTGFTRKLEIAGVGFRAEMKSDLLALTLGYSHMIYFKAPEGIKMETPDQVTVLISGIDKALVGQVAAKIRSFRKPEPYRGKGIKYEGEIIRRKEGKAAGK</sequence>
<comment type="function">
    <text evidence="1">This protein binds to the 23S rRNA, and is important in its secondary structure. It is located near the subunit interface in the base of the L7/L12 stalk, and near the tRNA binding site of the peptidyltransferase center.</text>
</comment>
<comment type="subunit">
    <text evidence="1">Part of the 50S ribosomal subunit.</text>
</comment>
<comment type="similarity">
    <text evidence="1">Belongs to the universal ribosomal protein uL6 family.</text>
</comment>
<protein>
    <recommendedName>
        <fullName evidence="1">Large ribosomal subunit protein uL6</fullName>
    </recommendedName>
    <alternativeName>
        <fullName evidence="2">50S ribosomal protein L6</fullName>
    </alternativeName>
</protein>
<feature type="chain" id="PRO_0000265270" description="Large ribosomal subunit protein uL6">
    <location>
        <begin position="1"/>
        <end position="179"/>
    </location>
</feature>
<proteinExistence type="inferred from homology"/>